<name>TYSY_PSYWF</name>
<proteinExistence type="inferred from homology"/>
<feature type="chain" id="PRO_0000321476" description="Thymidylate synthase">
    <location>
        <begin position="1"/>
        <end position="286"/>
    </location>
</feature>
<feature type="active site" description="Nucleophile" evidence="1">
    <location>
        <position position="168"/>
    </location>
</feature>
<feature type="binding site" description="in other chain" evidence="1">
    <location>
        <position position="27"/>
    </location>
    <ligand>
        <name>dUMP</name>
        <dbReference type="ChEBI" id="CHEBI:246422"/>
        <note>ligand shared between dimeric partners</note>
    </ligand>
</feature>
<feature type="binding site" evidence="1">
    <location>
        <position position="57"/>
    </location>
    <ligand>
        <name>(6R)-5,10-methylene-5,6,7,8-tetrahydrofolate</name>
        <dbReference type="ChEBI" id="CHEBI:15636"/>
    </ligand>
</feature>
<feature type="binding site" evidence="1">
    <location>
        <begin position="148"/>
        <end position="149"/>
    </location>
    <ligand>
        <name>dUMP</name>
        <dbReference type="ChEBI" id="CHEBI:246422"/>
        <note>ligand shared between dimeric partners</note>
    </ligand>
</feature>
<feature type="binding site" description="in other chain" evidence="1">
    <location>
        <begin position="188"/>
        <end position="191"/>
    </location>
    <ligand>
        <name>dUMP</name>
        <dbReference type="ChEBI" id="CHEBI:246422"/>
        <note>ligand shared between dimeric partners</note>
    </ligand>
</feature>
<feature type="binding site" evidence="1">
    <location>
        <position position="191"/>
    </location>
    <ligand>
        <name>(6R)-5,10-methylene-5,6,7,8-tetrahydrofolate</name>
        <dbReference type="ChEBI" id="CHEBI:15636"/>
    </ligand>
</feature>
<feature type="binding site" description="in other chain" evidence="1">
    <location>
        <position position="199"/>
    </location>
    <ligand>
        <name>dUMP</name>
        <dbReference type="ChEBI" id="CHEBI:246422"/>
        <note>ligand shared between dimeric partners</note>
    </ligand>
</feature>
<feature type="binding site" description="in other chain" evidence="1">
    <location>
        <begin position="229"/>
        <end position="231"/>
    </location>
    <ligand>
        <name>dUMP</name>
        <dbReference type="ChEBI" id="CHEBI:246422"/>
        <note>ligand shared between dimeric partners</note>
    </ligand>
</feature>
<feature type="binding site" evidence="1">
    <location>
        <position position="285"/>
    </location>
    <ligand>
        <name>(6R)-5,10-methylene-5,6,7,8-tetrahydrofolate</name>
        <dbReference type="ChEBI" id="CHEBI:15636"/>
    </ligand>
</feature>
<gene>
    <name evidence="1" type="primary">thyA</name>
    <name type="ordered locus">PsycPRwf_2331</name>
</gene>
<keyword id="KW-0963">Cytoplasm</keyword>
<keyword id="KW-0489">Methyltransferase</keyword>
<keyword id="KW-0545">Nucleotide biosynthesis</keyword>
<keyword id="KW-0808">Transferase</keyword>
<organism>
    <name type="scientific">Psychrobacter sp. (strain PRwf-1)</name>
    <dbReference type="NCBI Taxonomy" id="349106"/>
    <lineage>
        <taxon>Bacteria</taxon>
        <taxon>Pseudomonadati</taxon>
        <taxon>Pseudomonadota</taxon>
        <taxon>Gammaproteobacteria</taxon>
        <taxon>Moraxellales</taxon>
        <taxon>Moraxellaceae</taxon>
        <taxon>Psychrobacter</taxon>
    </lineage>
</organism>
<evidence type="ECO:0000255" key="1">
    <source>
        <dbReference type="HAMAP-Rule" id="MF_00008"/>
    </source>
</evidence>
<reference key="1">
    <citation type="submission" date="2007-05" db="EMBL/GenBank/DDBJ databases">
        <title>Complete sequence of chromosome of Psychrobacter sp. PRwf-1.</title>
        <authorList>
            <consortium name="US DOE Joint Genome Institute"/>
            <person name="Copeland A."/>
            <person name="Lucas S."/>
            <person name="Lapidus A."/>
            <person name="Barry K."/>
            <person name="Detter J.C."/>
            <person name="Glavina del Rio T."/>
            <person name="Hammon N."/>
            <person name="Israni S."/>
            <person name="Dalin E."/>
            <person name="Tice H."/>
            <person name="Pitluck S."/>
            <person name="Chain P."/>
            <person name="Malfatti S."/>
            <person name="Shin M."/>
            <person name="Vergez L."/>
            <person name="Schmutz J."/>
            <person name="Larimer F."/>
            <person name="Land M."/>
            <person name="Hauser L."/>
            <person name="Kyrpides N."/>
            <person name="Kim E."/>
            <person name="Tiedje J."/>
            <person name="Richardson P."/>
        </authorList>
    </citation>
    <scope>NUCLEOTIDE SEQUENCE [LARGE SCALE GENOMIC DNA]</scope>
    <source>
        <strain>PRwf-1</strain>
    </source>
</reference>
<dbReference type="EC" id="2.1.1.45" evidence="1"/>
<dbReference type="EMBL" id="CP000713">
    <property type="protein sequence ID" value="ABQ95271.1"/>
    <property type="molecule type" value="Genomic_DNA"/>
</dbReference>
<dbReference type="SMR" id="A5WHY0"/>
<dbReference type="STRING" id="349106.PsycPRwf_2331"/>
<dbReference type="KEGG" id="prw:PsycPRwf_2331"/>
<dbReference type="eggNOG" id="COG0207">
    <property type="taxonomic scope" value="Bacteria"/>
</dbReference>
<dbReference type="HOGENOM" id="CLU_021669_0_0_6"/>
<dbReference type="UniPathway" id="UPA00575"/>
<dbReference type="GO" id="GO:0005829">
    <property type="term" value="C:cytosol"/>
    <property type="evidence" value="ECO:0007669"/>
    <property type="project" value="TreeGrafter"/>
</dbReference>
<dbReference type="GO" id="GO:0004799">
    <property type="term" value="F:thymidylate synthase activity"/>
    <property type="evidence" value="ECO:0007669"/>
    <property type="project" value="UniProtKB-UniRule"/>
</dbReference>
<dbReference type="GO" id="GO:0006231">
    <property type="term" value="P:dTMP biosynthetic process"/>
    <property type="evidence" value="ECO:0007669"/>
    <property type="project" value="UniProtKB-UniRule"/>
</dbReference>
<dbReference type="GO" id="GO:0006235">
    <property type="term" value="P:dTTP biosynthetic process"/>
    <property type="evidence" value="ECO:0007669"/>
    <property type="project" value="UniProtKB-UniRule"/>
</dbReference>
<dbReference type="GO" id="GO:0032259">
    <property type="term" value="P:methylation"/>
    <property type="evidence" value="ECO:0007669"/>
    <property type="project" value="UniProtKB-KW"/>
</dbReference>
<dbReference type="CDD" id="cd00351">
    <property type="entry name" value="TS_Pyrimidine_HMase"/>
    <property type="match status" value="1"/>
</dbReference>
<dbReference type="FunFam" id="3.30.572.10:FF:000013">
    <property type="entry name" value="Thymidylate synthase"/>
    <property type="match status" value="1"/>
</dbReference>
<dbReference type="Gene3D" id="3.30.572.10">
    <property type="entry name" value="Thymidylate synthase/dCMP hydroxymethylase domain"/>
    <property type="match status" value="1"/>
</dbReference>
<dbReference type="HAMAP" id="MF_00008">
    <property type="entry name" value="Thymidy_synth_bact"/>
    <property type="match status" value="1"/>
</dbReference>
<dbReference type="InterPro" id="IPR045097">
    <property type="entry name" value="Thymidate_synth/dCMP_Mease"/>
</dbReference>
<dbReference type="InterPro" id="IPR023451">
    <property type="entry name" value="Thymidate_synth/dCMP_Mease_dom"/>
</dbReference>
<dbReference type="InterPro" id="IPR036926">
    <property type="entry name" value="Thymidate_synth/dCMP_Mease_sf"/>
</dbReference>
<dbReference type="InterPro" id="IPR000398">
    <property type="entry name" value="Thymidylate_synthase"/>
</dbReference>
<dbReference type="InterPro" id="IPR020940">
    <property type="entry name" value="Thymidylate_synthase_AS"/>
</dbReference>
<dbReference type="NCBIfam" id="NF002497">
    <property type="entry name" value="PRK01827.1-3"/>
    <property type="match status" value="1"/>
</dbReference>
<dbReference type="NCBIfam" id="TIGR03284">
    <property type="entry name" value="thym_sym"/>
    <property type="match status" value="2"/>
</dbReference>
<dbReference type="PANTHER" id="PTHR11548:SF9">
    <property type="entry name" value="THYMIDYLATE SYNTHASE"/>
    <property type="match status" value="1"/>
</dbReference>
<dbReference type="PANTHER" id="PTHR11548">
    <property type="entry name" value="THYMIDYLATE SYNTHASE 1"/>
    <property type="match status" value="1"/>
</dbReference>
<dbReference type="Pfam" id="PF00303">
    <property type="entry name" value="Thymidylat_synt"/>
    <property type="match status" value="1"/>
</dbReference>
<dbReference type="PRINTS" id="PR00108">
    <property type="entry name" value="THYMDSNTHASE"/>
</dbReference>
<dbReference type="SUPFAM" id="SSF55831">
    <property type="entry name" value="Thymidylate synthase/dCMP hydroxymethylase"/>
    <property type="match status" value="1"/>
</dbReference>
<dbReference type="PROSITE" id="PS00091">
    <property type="entry name" value="THYMIDYLATE_SYNTHASE"/>
    <property type="match status" value="1"/>
</dbReference>
<protein>
    <recommendedName>
        <fullName evidence="1">Thymidylate synthase</fullName>
        <shortName evidence="1">TS</shortName>
        <shortName evidence="1">TSase</shortName>
        <ecNumber evidence="1">2.1.1.45</ecNumber>
    </recommendedName>
</protein>
<sequence>MITSKNEAAYLDLIRYVRDHGTEKGDRTGTGTRSHFGAQLRFDLKDGFPLLTTKKVHMKSITYELFWFLKGDTHVKYLQDHGVRIWNEWSTAEQTARFGRPEGELGPIYGHQWRNYGATKAEDGRYNQDGVDQVVEVIEQIKSNPNSRRLIVSGWNPAEATQVALPPCHTLFQFFVADGKLSCQLYQRSADLFLGVPFNIASYSLLTHMIAQVCDLEVGEFIWTGGDCHLYQNHIDQVNEQLSREAYELPKLWLNPEIKDIFDFTFDDIRVEGYQSHPAIKAPVAV</sequence>
<comment type="function">
    <text evidence="1">Catalyzes the reductive methylation of 2'-deoxyuridine-5'-monophosphate (dUMP) to 2'-deoxythymidine-5'-monophosphate (dTMP) while utilizing 5,10-methylenetetrahydrofolate (mTHF) as the methyl donor and reductant in the reaction, yielding dihydrofolate (DHF) as a by-product. This enzymatic reaction provides an intracellular de novo source of dTMP, an essential precursor for DNA biosynthesis.</text>
</comment>
<comment type="catalytic activity">
    <reaction evidence="1">
        <text>dUMP + (6R)-5,10-methylene-5,6,7,8-tetrahydrofolate = 7,8-dihydrofolate + dTMP</text>
        <dbReference type="Rhea" id="RHEA:12104"/>
        <dbReference type="ChEBI" id="CHEBI:15636"/>
        <dbReference type="ChEBI" id="CHEBI:57451"/>
        <dbReference type="ChEBI" id="CHEBI:63528"/>
        <dbReference type="ChEBI" id="CHEBI:246422"/>
        <dbReference type="EC" id="2.1.1.45"/>
    </reaction>
</comment>
<comment type="pathway">
    <text evidence="1">Pyrimidine metabolism; dTTP biosynthesis.</text>
</comment>
<comment type="subunit">
    <text evidence="1">Homodimer.</text>
</comment>
<comment type="subcellular location">
    <subcellularLocation>
        <location evidence="1">Cytoplasm</location>
    </subcellularLocation>
</comment>
<comment type="similarity">
    <text evidence="1">Belongs to the thymidylate synthase family. Bacterial-type ThyA subfamily.</text>
</comment>
<accession>A5WHY0</accession>